<organism>
    <name type="scientific">Escherichia coli (strain K12)</name>
    <dbReference type="NCBI Taxonomy" id="83333"/>
    <lineage>
        <taxon>Bacteria</taxon>
        <taxon>Pseudomonadati</taxon>
        <taxon>Pseudomonadota</taxon>
        <taxon>Gammaproteobacteria</taxon>
        <taxon>Enterobacterales</taxon>
        <taxon>Enterobacteriaceae</taxon>
        <taxon>Escherichia</taxon>
    </lineage>
</organism>
<sequence length="219" mass="22788">MPALDLIRPSVTAMRVIASVNADFARELKLPPHIRSLGLISADSDDVTYIAADEATKQAMVEVVYGRSLYAGAAHGPSPTAGEVLIMLGGPNPAEVRAGLDAMIAHIENGAAFQWANDAQDTAFLAHVVSRTGSYLSSTAGITLGDPMAYLVAPPLEATYGIDAALKSADVQLATYVPPPSETNYSAAFLTGSQAACKAACNAFTDAVLEIARNPIQRA</sequence>
<protein>
    <recommendedName>
        <fullName>Bacterial microcompartment shell protein EutL</fullName>
    </recommendedName>
    <alternativeName>
        <fullName evidence="7">BMC-T</fullName>
    </alternativeName>
    <alternativeName>
        <fullName>Ethanolamine utilization protein EutL</fullName>
    </alternativeName>
</protein>
<evidence type="ECO:0000250" key="1">
    <source>
        <dbReference type="UniProtKB" id="Q8XLZ0"/>
    </source>
</evidence>
<evidence type="ECO:0000255" key="2">
    <source>
        <dbReference type="PROSITE-ProRule" id="PRU01279"/>
    </source>
</evidence>
<evidence type="ECO:0000269" key="3">
    <source>
    </source>
</evidence>
<evidence type="ECO:0000269" key="4">
    <source>
    </source>
</evidence>
<evidence type="ECO:0000269" key="5">
    <source>
    </source>
</evidence>
<evidence type="ECO:0000269" key="6">
    <source>
    </source>
</evidence>
<evidence type="ECO:0000305" key="7"/>
<evidence type="ECO:0000305" key="8">
    <source>
    </source>
</evidence>
<evidence type="ECO:0000305" key="9">
    <source>
    </source>
</evidence>
<evidence type="ECO:0000305" key="10">
    <source>
    </source>
</evidence>
<evidence type="ECO:0000305" key="11">
    <source>
    </source>
</evidence>
<evidence type="ECO:0007744" key="12">
    <source>
        <dbReference type="PDB" id="3GFH"/>
    </source>
</evidence>
<evidence type="ECO:0007744" key="13">
    <source>
        <dbReference type="PDB" id="3I82"/>
    </source>
</evidence>
<evidence type="ECO:0007744" key="14">
    <source>
        <dbReference type="PDB" id="3I87"/>
    </source>
</evidence>
<evidence type="ECO:0007744" key="15">
    <source>
        <dbReference type="PDB" id="3MPV"/>
    </source>
</evidence>
<evidence type="ECO:0007829" key="16">
    <source>
        <dbReference type="PDB" id="3GFH"/>
    </source>
</evidence>
<evidence type="ECO:0007829" key="17">
    <source>
        <dbReference type="PDB" id="3I82"/>
    </source>
</evidence>
<reference key="1">
    <citation type="journal article" date="1997" name="Science">
        <title>The complete genome sequence of Escherichia coli K-12.</title>
        <authorList>
            <person name="Blattner F.R."/>
            <person name="Plunkett G. III"/>
            <person name="Bloch C.A."/>
            <person name="Perna N.T."/>
            <person name="Burland V."/>
            <person name="Riley M."/>
            <person name="Collado-Vides J."/>
            <person name="Glasner J.D."/>
            <person name="Rode C.K."/>
            <person name="Mayhew G.F."/>
            <person name="Gregor J."/>
            <person name="Davis N.W."/>
            <person name="Kirkpatrick H.A."/>
            <person name="Goeden M.A."/>
            <person name="Rose D.J."/>
            <person name="Mau B."/>
            <person name="Shao Y."/>
        </authorList>
    </citation>
    <scope>NUCLEOTIDE SEQUENCE [LARGE SCALE GENOMIC DNA]</scope>
    <source>
        <strain>K12 / MG1655 / ATCC 47076</strain>
    </source>
</reference>
<reference key="2">
    <citation type="journal article" date="2006" name="Mol. Syst. Biol.">
        <title>Highly accurate genome sequences of Escherichia coli K-12 strains MG1655 and W3110.</title>
        <authorList>
            <person name="Hayashi K."/>
            <person name="Morooka N."/>
            <person name="Yamamoto Y."/>
            <person name="Fujita K."/>
            <person name="Isono K."/>
            <person name="Choi S."/>
            <person name="Ohtsubo E."/>
            <person name="Baba T."/>
            <person name="Wanner B.L."/>
            <person name="Mori H."/>
            <person name="Horiuchi T."/>
        </authorList>
    </citation>
    <scope>NUCLEOTIDE SEQUENCE [LARGE SCALE GENOMIC DNA]</scope>
    <source>
        <strain>K12 / W3110 / ATCC 27325 / DSM 5911</strain>
    </source>
</reference>
<reference key="3">
    <citation type="journal article" date="2009" name="Acta Crystallogr. F">
        <title>Preliminary structural investigations of the Eut-L shell protein of the ethanolamine ammonia-lyase metabolosome of Escherichia coli.</title>
        <authorList>
            <person name="Nikolakakis K."/>
            <person name="Ohtaki A."/>
            <person name="Newton K."/>
            <person name="Chworos A."/>
            <person name="Sagermann M."/>
        </authorList>
    </citation>
    <scope>PRELIMINARY STRUCTURAL CHARACTERIZATION</scope>
    <scope>SUBUNIT</scope>
</reference>
<reference evidence="12" key="4">
    <citation type="journal article" date="2009" name="Proc. Natl. Acad. Sci. U.S.A.">
        <title>Crystal structure of the EutL shell protein of the ethanolamine ammonia lyase microcompartment.</title>
        <authorList>
            <person name="Sagermann M."/>
            <person name="Ohtaki A."/>
            <person name="Nikolakakis K."/>
        </authorList>
    </citation>
    <scope>X-RAY CRYSTALLOGRAPHY (2.20 ANGSTROMS) IN CLOSED FORM</scope>
    <scope>FUNCTION</scope>
    <scope>SUBUNIT</scope>
    <scope>SUBCELLULAR LOCATION</scope>
    <scope>DOMAIN</scope>
    <source>
        <strain>K12 / MG1655 / ATCC 47076</strain>
    </source>
</reference>
<reference evidence="13 14" key="5">
    <citation type="journal article" date="2010" name="Science">
        <title>Structure and mechanisms of a protein-based organelle in Escherichia coli.</title>
        <authorList>
            <person name="Tanaka S."/>
            <person name="Sawaya M.R."/>
            <person name="Yeates T.O."/>
        </authorList>
    </citation>
    <scope>X-RAY CRYSTALLOGRAPHY (2.30 ANGSTROMS) IN CLOSED AND OPEN FORM</scope>
    <scope>FUNCTION</scope>
    <scope>SUBUNIT</scope>
    <scope>SUBCELLULAR LOCATION</scope>
</reference>
<reference evidence="15" key="6">
    <citation type="journal article" date="2010" name="J. Bacteriol.">
        <title>Crystallographic insights into the pore structures and mechanisms of the EutL and EutM shell proteins of the ethanolamine-utilizing microcompartment of Escherichia coli.</title>
        <authorList>
            <person name="Takenoya M."/>
            <person name="Nikolakakis K."/>
            <person name="Sagermann M."/>
        </authorList>
    </citation>
    <scope>X-RAY CRYSTALLOGRAPHY (2.60 ANGSTROMS) IN COMPLEX WITH ZINC (OPEN FORM)</scope>
    <scope>FUNCTION</scope>
    <scope>SUBUNIT</scope>
    <scope>SUBCELLULAR LOCATION</scope>
    <scope>DOMAIN</scope>
    <source>
        <strain>K12 / MG1655 / ATCC 47076</strain>
    </source>
</reference>
<keyword id="KW-0002">3D-structure</keyword>
<keyword id="KW-1283">Bacterial microcompartment</keyword>
<keyword id="KW-0479">Metal-binding</keyword>
<keyword id="KW-1185">Reference proteome</keyword>
<keyword id="KW-0862">Zinc</keyword>
<gene>
    <name type="primary">eutL</name>
    <name type="synonym">yffJ</name>
    <name type="ordered locus">b2439</name>
    <name type="ordered locus">JW2432</name>
</gene>
<feature type="chain" id="PRO_0000201516" description="Bacterial microcompartment shell protein EutL">
    <location>
        <begin position="1"/>
        <end position="219"/>
    </location>
</feature>
<feature type="domain" description="BMC circularly permuted 1" evidence="2">
    <location>
        <begin position="1"/>
        <end position="113"/>
    </location>
</feature>
<feature type="domain" description="BMC circularly permuted 2" evidence="2">
    <location>
        <begin position="114"/>
        <end position="215"/>
    </location>
</feature>
<feature type="region of interest" description="Part of the acidic patch lining the small pore" evidence="4">
    <location>
        <begin position="45"/>
        <end position="46"/>
    </location>
</feature>
<feature type="binding site" evidence="1">
    <location>
        <position position="45"/>
    </location>
    <ligand>
        <name>ethanolamine</name>
        <dbReference type="ChEBI" id="CHEBI:57603"/>
        <label>1</label>
    </ligand>
</feature>
<feature type="binding site" evidence="1">
    <location>
        <position position="46"/>
    </location>
    <ligand>
        <name>ethanolamine</name>
        <dbReference type="ChEBI" id="CHEBI:57603"/>
        <label>2</label>
    </ligand>
</feature>
<feature type="binding site" evidence="1">
    <location>
        <position position="83"/>
    </location>
    <ligand>
        <name>ethanolamine</name>
        <dbReference type="ChEBI" id="CHEBI:57603"/>
        <label>1</label>
    </ligand>
</feature>
<feature type="binding site" evidence="1">
    <location>
        <position position="113"/>
    </location>
    <ligand>
        <name>ethanolamine</name>
        <dbReference type="ChEBI" id="CHEBI:57603"/>
        <label>1</label>
    </ligand>
</feature>
<feature type="binding site" evidence="15">
    <location>
        <position position="157"/>
    </location>
    <ligand>
        <name>Zn(2+)</name>
        <dbReference type="ChEBI" id="CHEBI:29105"/>
    </ligand>
</feature>
<feature type="binding site" evidence="1">
    <location>
        <begin position="183"/>
        <end position="185"/>
    </location>
    <ligand>
        <name>ethanolamine</name>
        <dbReference type="ChEBI" id="CHEBI:57603"/>
        <label>1</label>
    </ligand>
</feature>
<feature type="site" description="Part of the acidic patch lining the small pore" evidence="4">
    <location>
        <position position="53"/>
    </location>
</feature>
<feature type="site" description="Important for gating" evidence="1">
    <location>
        <position position="70"/>
    </location>
</feature>
<feature type="site" description="Part of the acidic patch lining the small pore" evidence="4">
    <location>
        <position position="83"/>
    </location>
</feature>
<feature type="site" description="Important for gating" evidence="1">
    <location>
        <position position="184"/>
    </location>
</feature>
<feature type="strand" evidence="16">
    <location>
        <begin position="11"/>
        <end position="19"/>
    </location>
</feature>
<feature type="helix" evidence="16">
    <location>
        <begin position="22"/>
        <end position="27"/>
    </location>
</feature>
<feature type="strand" evidence="16">
    <location>
        <begin position="36"/>
        <end position="43"/>
    </location>
</feature>
<feature type="helix" evidence="16">
    <location>
        <begin position="45"/>
        <end position="58"/>
    </location>
</feature>
<feature type="strand" evidence="16">
    <location>
        <begin position="62"/>
        <end position="68"/>
    </location>
</feature>
<feature type="helix" evidence="17">
    <location>
        <begin position="73"/>
        <end position="75"/>
    </location>
</feature>
<feature type="turn" evidence="16">
    <location>
        <begin position="79"/>
        <end position="81"/>
    </location>
</feature>
<feature type="strand" evidence="16">
    <location>
        <begin position="84"/>
        <end position="92"/>
    </location>
</feature>
<feature type="helix" evidence="16">
    <location>
        <begin position="93"/>
        <end position="107"/>
    </location>
</feature>
<feature type="strand" evidence="17">
    <location>
        <begin position="109"/>
        <end position="111"/>
    </location>
</feature>
<feature type="strand" evidence="16">
    <location>
        <begin position="113"/>
        <end position="117"/>
    </location>
</feature>
<feature type="strand" evidence="16">
    <location>
        <begin position="123"/>
        <end position="131"/>
    </location>
</feature>
<feature type="helix" evidence="16">
    <location>
        <begin position="134"/>
        <end position="137"/>
    </location>
</feature>
<feature type="strand" evidence="16">
    <location>
        <begin position="148"/>
        <end position="153"/>
    </location>
</feature>
<feature type="helix" evidence="16">
    <location>
        <begin position="155"/>
        <end position="168"/>
    </location>
</feature>
<feature type="strand" evidence="16">
    <location>
        <begin position="172"/>
        <end position="177"/>
    </location>
</feature>
<feature type="strand" evidence="16">
    <location>
        <begin position="186"/>
        <end position="192"/>
    </location>
</feature>
<feature type="strand" evidence="16">
    <location>
        <begin position="194"/>
        <end position="196"/>
    </location>
</feature>
<feature type="helix" evidence="16">
    <location>
        <begin position="199"/>
        <end position="213"/>
    </location>
</feature>
<name>EUTL_ECOLI</name>
<dbReference type="EMBL" id="U00096">
    <property type="protein sequence ID" value="AAC75492.1"/>
    <property type="molecule type" value="Genomic_DNA"/>
</dbReference>
<dbReference type="EMBL" id="AP009048">
    <property type="protein sequence ID" value="BAE76715.1"/>
    <property type="molecule type" value="Genomic_DNA"/>
</dbReference>
<dbReference type="PIR" id="F65018">
    <property type="entry name" value="F65018"/>
</dbReference>
<dbReference type="RefSeq" id="NP_416934.1">
    <property type="nucleotide sequence ID" value="NC_000913.3"/>
</dbReference>
<dbReference type="RefSeq" id="WP_001111023.1">
    <property type="nucleotide sequence ID" value="NZ_LN832404.1"/>
</dbReference>
<dbReference type="PDB" id="3GFH">
    <property type="method" value="X-ray"/>
    <property type="resolution" value="2.20 A"/>
    <property type="chains" value="A/B=1-219"/>
</dbReference>
<dbReference type="PDB" id="3I82">
    <property type="method" value="X-ray"/>
    <property type="resolution" value="2.31 A"/>
    <property type="chains" value="A=1-219"/>
</dbReference>
<dbReference type="PDB" id="3I87">
    <property type="method" value="X-ray"/>
    <property type="resolution" value="2.30 A"/>
    <property type="chains" value="A=1-219"/>
</dbReference>
<dbReference type="PDB" id="3MPV">
    <property type="method" value="X-ray"/>
    <property type="resolution" value="2.60 A"/>
    <property type="chains" value="A/B=1-219"/>
</dbReference>
<dbReference type="PDBsum" id="3GFH"/>
<dbReference type="PDBsum" id="3I82"/>
<dbReference type="PDBsum" id="3I87"/>
<dbReference type="PDBsum" id="3MPV"/>
<dbReference type="SMR" id="P76541"/>
<dbReference type="BioGRID" id="4260576">
    <property type="interactions" value="14"/>
</dbReference>
<dbReference type="DIP" id="DIP-9536N"/>
<dbReference type="FunCoup" id="P76541">
    <property type="interactions" value="11"/>
</dbReference>
<dbReference type="IntAct" id="P76541">
    <property type="interactions" value="1"/>
</dbReference>
<dbReference type="STRING" id="511145.b2439"/>
<dbReference type="TCDB" id="1.S.2.1.1">
    <property type="family name" value="the bacterial microcompartment shell/pore-forming protein-2 (bmc-sp2) family"/>
</dbReference>
<dbReference type="jPOST" id="P76541"/>
<dbReference type="PaxDb" id="511145-b2439"/>
<dbReference type="EnsemblBacteria" id="AAC75492">
    <property type="protein sequence ID" value="AAC75492"/>
    <property type="gene ID" value="b2439"/>
</dbReference>
<dbReference type="GeneID" id="946914"/>
<dbReference type="KEGG" id="ecj:JW2432"/>
<dbReference type="KEGG" id="eco:b2439"/>
<dbReference type="KEGG" id="ecoc:C3026_13545"/>
<dbReference type="PATRIC" id="fig|1411691.4.peg.4292"/>
<dbReference type="EchoBASE" id="EB3923"/>
<dbReference type="eggNOG" id="COG4816">
    <property type="taxonomic scope" value="Bacteria"/>
</dbReference>
<dbReference type="HOGENOM" id="CLU_1270774_0_0_6"/>
<dbReference type="InParanoid" id="P76541"/>
<dbReference type="OMA" id="HCISRTG"/>
<dbReference type="OrthoDB" id="3283at2"/>
<dbReference type="PhylomeDB" id="P76541"/>
<dbReference type="BioCyc" id="EcoCyc:G7271-MONOMER"/>
<dbReference type="UniPathway" id="UPA00560"/>
<dbReference type="EvolutionaryTrace" id="P76541"/>
<dbReference type="PRO" id="PR:P76541"/>
<dbReference type="Proteomes" id="UP000000625">
    <property type="component" value="Chromosome"/>
</dbReference>
<dbReference type="GO" id="GO:0031471">
    <property type="term" value="C:ethanolamine degradation polyhedral organelle"/>
    <property type="evidence" value="ECO:0000250"/>
    <property type="project" value="EcoCyc"/>
</dbReference>
<dbReference type="GO" id="GO:0042802">
    <property type="term" value="F:identical protein binding"/>
    <property type="evidence" value="ECO:0000353"/>
    <property type="project" value="IntAct"/>
</dbReference>
<dbReference type="GO" id="GO:0005198">
    <property type="term" value="F:structural molecule activity"/>
    <property type="evidence" value="ECO:0000250"/>
    <property type="project" value="EcoCyc"/>
</dbReference>
<dbReference type="GO" id="GO:0008270">
    <property type="term" value="F:zinc ion binding"/>
    <property type="evidence" value="ECO:0000314"/>
    <property type="project" value="EcoCyc"/>
</dbReference>
<dbReference type="GO" id="GO:0046336">
    <property type="term" value="P:ethanolamine catabolic process"/>
    <property type="evidence" value="ECO:0007669"/>
    <property type="project" value="UniProtKB-UniPathway"/>
</dbReference>
<dbReference type="CDD" id="cd07049">
    <property type="entry name" value="BMC_EutL_repeat1"/>
    <property type="match status" value="1"/>
</dbReference>
<dbReference type="CDD" id="cd07050">
    <property type="entry name" value="BMC_EutL_repeat2"/>
    <property type="match status" value="1"/>
</dbReference>
<dbReference type="FunFam" id="3.30.70.1710:FF:000004">
    <property type="entry name" value="Ethanolamine utilization microcompartment protein EutL"/>
    <property type="match status" value="1"/>
</dbReference>
<dbReference type="FunFam" id="3.30.70.1710:FF:000003">
    <property type="entry name" value="Ethanolamine utilization protein EutL"/>
    <property type="match status" value="1"/>
</dbReference>
<dbReference type="Gene3D" id="3.30.70.1710">
    <property type="match status" value="2"/>
</dbReference>
<dbReference type="InterPro" id="IPR044870">
    <property type="entry name" value="BMC_CP"/>
</dbReference>
<dbReference type="InterPro" id="IPR000249">
    <property type="entry name" value="BMC_dom"/>
</dbReference>
<dbReference type="InterPro" id="IPR037233">
    <property type="entry name" value="CcmK-like_sf"/>
</dbReference>
<dbReference type="InterPro" id="IPR030983">
    <property type="entry name" value="EutL"/>
</dbReference>
<dbReference type="InterPro" id="IPR009193">
    <property type="entry name" value="EutL_PduB"/>
</dbReference>
<dbReference type="NCBIfam" id="TIGR04502">
    <property type="entry name" value="microcomp_EutL"/>
    <property type="match status" value="1"/>
</dbReference>
<dbReference type="NCBIfam" id="NF011934">
    <property type="entry name" value="PRK15405.1"/>
    <property type="match status" value="1"/>
</dbReference>
<dbReference type="Pfam" id="PF00936">
    <property type="entry name" value="BMC"/>
    <property type="match status" value="2"/>
</dbReference>
<dbReference type="PIRSF" id="PIRSF012290">
    <property type="entry name" value="EutL_PduB"/>
    <property type="match status" value="1"/>
</dbReference>
<dbReference type="SMART" id="SM00877">
    <property type="entry name" value="BMC"/>
    <property type="match status" value="2"/>
</dbReference>
<dbReference type="SUPFAM" id="SSF143414">
    <property type="entry name" value="CcmK-like"/>
    <property type="match status" value="1"/>
</dbReference>
<dbReference type="PROSITE" id="PS51931">
    <property type="entry name" value="BMC_CP"/>
    <property type="match status" value="2"/>
</dbReference>
<proteinExistence type="evidence at protein level"/>
<accession>P76541</accession>
<accession>Q2MAJ1</accession>
<comment type="function">
    <text evidence="1 4 5 6 8 9 10 12 13 15">A component of the bacterial microcompartment (BMC) shell dedicated to ethanolamine degradation (Probable). Two crystal forms have been seen; a form with a closed central pore that has 3 very small (1.1-2.2 Angstroms) channels per trimer lined by acidic and aromatic residues (PubMed:19451619, PubMed:20044574). A form with a large central pore (8-12 Angstroms) has also been seen; this is probably a functional pore which allows molecules to enter and exit the BMC in a selective, gated manner (PubMed:20044574, PubMed:20851901). Another group only sees the central pore in the presence of Zn(2+); soaking crystals in ZnCl(2) leads to dramatic conformational changes that open a central pore of about 12 Angstroms. Whether Zn(2+) binding is physiologically relevant is unclear, however it suggests a gating mechanism exists (PubMed:20851901). Ethanolamine-binding by the small channels has been hypothesized to stabilize the EutL central pore in a closed (non-transporting) state. An open pore is thought to be large enough to transport ATP and/or cobalamin (By similarity).</text>
</comment>
<comment type="pathway">
    <text>Amine and polyamine degradation; ethanolamine degradation.</text>
</comment>
<comment type="subunit">
    <text evidence="3 4 5 6">Homotrimerizes to form a pseudohexamer (PubMed:19194002, PubMed:19451619, PubMed:20044574, PubMed:20851901). The trimers form a two-dimensional array about 37 Angstroms thick (PubMed:19451619, PubMed:20044574).</text>
</comment>
<comment type="interaction">
    <interactant intactId="EBI-1128826">
        <id>P76541</id>
    </interactant>
    <interactant intactId="EBI-1128826">
        <id>P76541</id>
        <label>eutL</label>
    </interactant>
    <organismsDiffer>false</organismsDiffer>
    <experiments>3</experiments>
</comment>
<comment type="subcellular location">
    <subcellularLocation>
        <location evidence="8 9 10">Bacterial microcompartment</location>
    </subcellularLocation>
</comment>
<comment type="domain">
    <text evidence="8">Has 2 BMC domains which can evolve independently of each other.</text>
</comment>
<comment type="similarity">
    <text evidence="2">Belongs to the EutL/PduB family.</text>
</comment>
<comment type="caution">
    <text evidence="11">In strain MG1655 the eut operon is interrupted by the CPZ-55 prophage, encoding 9 genes situated between eutA and eutB, which are translated in the other direction. CPZ-55 may prevent expression of the eut operon in strain MG1655. Strain W3110 does not have this prophage element and should be able to express the operon.</text>
</comment>